<comment type="function">
    <text evidence="1">Catalyzes the transfer of a dimethylallyl group onto the adenine at position 37 in tRNAs that read codons beginning with uridine, leading to the formation of N6-(dimethylallyl)adenosine (i(6)A).</text>
</comment>
<comment type="catalytic activity">
    <reaction evidence="1">
        <text>adenosine(37) in tRNA + dimethylallyl diphosphate = N(6)-dimethylallyladenosine(37) in tRNA + diphosphate</text>
        <dbReference type="Rhea" id="RHEA:26482"/>
        <dbReference type="Rhea" id="RHEA-COMP:10162"/>
        <dbReference type="Rhea" id="RHEA-COMP:10375"/>
        <dbReference type="ChEBI" id="CHEBI:33019"/>
        <dbReference type="ChEBI" id="CHEBI:57623"/>
        <dbReference type="ChEBI" id="CHEBI:74411"/>
        <dbReference type="ChEBI" id="CHEBI:74415"/>
        <dbReference type="EC" id="2.5.1.75"/>
    </reaction>
</comment>
<comment type="cofactor">
    <cofactor evidence="1">
        <name>Mg(2+)</name>
        <dbReference type="ChEBI" id="CHEBI:18420"/>
    </cofactor>
</comment>
<comment type="subunit">
    <text evidence="1">Monomer.</text>
</comment>
<comment type="similarity">
    <text evidence="1">Belongs to the IPP transferase family.</text>
</comment>
<feature type="chain" id="PRO_0000163953" description="tRNA dimethylallyltransferase">
    <location>
        <begin position="1"/>
        <end position="299"/>
    </location>
</feature>
<feature type="region of interest" description="Interaction with substrate tRNA" evidence="1">
    <location>
        <begin position="38"/>
        <end position="41"/>
    </location>
</feature>
<feature type="binding site" evidence="1">
    <location>
        <begin position="13"/>
        <end position="20"/>
    </location>
    <ligand>
        <name>ATP</name>
        <dbReference type="ChEBI" id="CHEBI:30616"/>
    </ligand>
</feature>
<feature type="binding site" evidence="1">
    <location>
        <begin position="15"/>
        <end position="20"/>
    </location>
    <ligand>
        <name>substrate</name>
    </ligand>
</feature>
<feature type="site" description="Interaction with substrate tRNA" evidence="1">
    <location>
        <position position="104"/>
    </location>
</feature>
<accession>Q7TV89</accession>
<evidence type="ECO:0000255" key="1">
    <source>
        <dbReference type="HAMAP-Rule" id="MF_00185"/>
    </source>
</evidence>
<keyword id="KW-0067">ATP-binding</keyword>
<keyword id="KW-0460">Magnesium</keyword>
<keyword id="KW-0547">Nucleotide-binding</keyword>
<keyword id="KW-1185">Reference proteome</keyword>
<keyword id="KW-0808">Transferase</keyword>
<keyword id="KW-0819">tRNA processing</keyword>
<organism>
    <name type="scientific">Prochlorococcus marinus (strain SARG / CCMP1375 / SS120)</name>
    <dbReference type="NCBI Taxonomy" id="167539"/>
    <lineage>
        <taxon>Bacteria</taxon>
        <taxon>Bacillati</taxon>
        <taxon>Cyanobacteriota</taxon>
        <taxon>Cyanophyceae</taxon>
        <taxon>Synechococcales</taxon>
        <taxon>Prochlorococcaceae</taxon>
        <taxon>Prochlorococcus</taxon>
    </lineage>
</organism>
<protein>
    <recommendedName>
        <fullName evidence="1">tRNA dimethylallyltransferase</fullName>
        <ecNumber evidence="1">2.5.1.75</ecNumber>
    </recommendedName>
    <alternativeName>
        <fullName evidence="1">Dimethylallyl diphosphate:tRNA dimethylallyltransferase</fullName>
        <shortName evidence="1">DMAPP:tRNA dimethylallyltransferase</shortName>
        <shortName evidence="1">DMATase</shortName>
    </alternativeName>
    <alternativeName>
        <fullName evidence="1">Isopentenyl-diphosphate:tRNA isopentenyltransferase</fullName>
        <shortName evidence="1">IPP transferase</shortName>
        <shortName evidence="1">IPPT</shortName>
        <shortName evidence="1">IPTase</shortName>
    </alternativeName>
</protein>
<dbReference type="EC" id="2.5.1.75" evidence="1"/>
<dbReference type="EMBL" id="AE017126">
    <property type="protein sequence ID" value="AAQ00841.1"/>
    <property type="molecule type" value="Genomic_DNA"/>
</dbReference>
<dbReference type="RefSeq" id="NP_876188.1">
    <property type="nucleotide sequence ID" value="NC_005042.1"/>
</dbReference>
<dbReference type="RefSeq" id="WP_011125946.1">
    <property type="nucleotide sequence ID" value="NC_005042.1"/>
</dbReference>
<dbReference type="SMR" id="Q7TV89"/>
<dbReference type="STRING" id="167539.Pro_1797"/>
<dbReference type="EnsemblBacteria" id="AAQ00841">
    <property type="protein sequence ID" value="AAQ00841"/>
    <property type="gene ID" value="Pro_1797"/>
</dbReference>
<dbReference type="KEGG" id="pma:Pro_1797"/>
<dbReference type="PATRIC" id="fig|167539.5.peg.1899"/>
<dbReference type="eggNOG" id="COG0324">
    <property type="taxonomic scope" value="Bacteria"/>
</dbReference>
<dbReference type="HOGENOM" id="CLU_032616_0_1_3"/>
<dbReference type="OrthoDB" id="9776390at2"/>
<dbReference type="Proteomes" id="UP000001420">
    <property type="component" value="Chromosome"/>
</dbReference>
<dbReference type="GO" id="GO:0005524">
    <property type="term" value="F:ATP binding"/>
    <property type="evidence" value="ECO:0007669"/>
    <property type="project" value="UniProtKB-UniRule"/>
</dbReference>
<dbReference type="GO" id="GO:0052381">
    <property type="term" value="F:tRNA dimethylallyltransferase activity"/>
    <property type="evidence" value="ECO:0007669"/>
    <property type="project" value="UniProtKB-UniRule"/>
</dbReference>
<dbReference type="GO" id="GO:0006400">
    <property type="term" value="P:tRNA modification"/>
    <property type="evidence" value="ECO:0007669"/>
    <property type="project" value="TreeGrafter"/>
</dbReference>
<dbReference type="Gene3D" id="1.10.20.140">
    <property type="match status" value="1"/>
</dbReference>
<dbReference type="Gene3D" id="3.40.50.300">
    <property type="entry name" value="P-loop containing nucleotide triphosphate hydrolases"/>
    <property type="match status" value="1"/>
</dbReference>
<dbReference type="HAMAP" id="MF_00185">
    <property type="entry name" value="IPP_trans"/>
    <property type="match status" value="1"/>
</dbReference>
<dbReference type="InterPro" id="IPR039657">
    <property type="entry name" value="Dimethylallyltransferase"/>
</dbReference>
<dbReference type="InterPro" id="IPR018022">
    <property type="entry name" value="IPT"/>
</dbReference>
<dbReference type="InterPro" id="IPR027417">
    <property type="entry name" value="P-loop_NTPase"/>
</dbReference>
<dbReference type="NCBIfam" id="TIGR00174">
    <property type="entry name" value="miaA"/>
    <property type="match status" value="1"/>
</dbReference>
<dbReference type="PANTHER" id="PTHR11088">
    <property type="entry name" value="TRNA DIMETHYLALLYLTRANSFERASE"/>
    <property type="match status" value="1"/>
</dbReference>
<dbReference type="PANTHER" id="PTHR11088:SF60">
    <property type="entry name" value="TRNA DIMETHYLALLYLTRANSFERASE"/>
    <property type="match status" value="1"/>
</dbReference>
<dbReference type="Pfam" id="PF01715">
    <property type="entry name" value="IPPT"/>
    <property type="match status" value="1"/>
</dbReference>
<dbReference type="SUPFAM" id="SSF52540">
    <property type="entry name" value="P-loop containing nucleoside triphosphate hydrolases"/>
    <property type="match status" value="2"/>
</dbReference>
<sequence length="299" mass="34078">MQNPKPLVIVLLGPTASGKTDLAIQIAKKIKVSIHNIDSRQLYKGMNIGTAKPTIEQQEEIKHYLLDLKDPNNPITLHEFKKEAELSLKNIFSKEKCGFLVGGSGLYLKSLTSGLCPPSVPAQEKLRKEFRRLGQKECHQILKKCDPIAWEKISPRDSIRTIRALEVFYSTGQTISSLKTLKPPDWNLLELGLDPRNLQQRIAKRTKILFQKGLIDETKALIHQYGEDLPLLQTIGYKEACTVIKGEYSITEAIEITTQRTNQFAKKQRTWFRRQHNPKWLNEKNSLEEALSLIQNVIG</sequence>
<proteinExistence type="inferred from homology"/>
<reference key="1">
    <citation type="journal article" date="2003" name="Proc. Natl. Acad. Sci. U.S.A.">
        <title>Genome sequence of the cyanobacterium Prochlorococcus marinus SS120, a nearly minimal oxyphototrophic genome.</title>
        <authorList>
            <person name="Dufresne A."/>
            <person name="Salanoubat M."/>
            <person name="Partensky F."/>
            <person name="Artiguenave F."/>
            <person name="Axmann I.M."/>
            <person name="Barbe V."/>
            <person name="Duprat S."/>
            <person name="Galperin M.Y."/>
            <person name="Koonin E.V."/>
            <person name="Le Gall F."/>
            <person name="Makarova K.S."/>
            <person name="Ostrowski M."/>
            <person name="Oztas S."/>
            <person name="Robert C."/>
            <person name="Rogozin I.B."/>
            <person name="Scanlan D.J."/>
            <person name="Tandeau de Marsac N."/>
            <person name="Weissenbach J."/>
            <person name="Wincker P."/>
            <person name="Wolf Y.I."/>
            <person name="Hess W.R."/>
        </authorList>
    </citation>
    <scope>NUCLEOTIDE SEQUENCE [LARGE SCALE GENOMIC DNA]</scope>
    <source>
        <strain>SARG / CCMP1375 / SS120</strain>
    </source>
</reference>
<name>MIAA_PROMA</name>
<gene>
    <name evidence="1" type="primary">miaA</name>
    <name type="ordered locus">Pro_1797</name>
</gene>